<comment type="function">
    <text evidence="1">Can catalyze the hydrolysis of ATP in the presence of single-stranded DNA, the ATP-dependent uptake of single-stranded DNA by duplex DNA, and the ATP-dependent hybridization of homologous single-stranded DNAs. It interacts with LexA causing its activation and leading to its autocatalytic cleavage.</text>
</comment>
<comment type="subcellular location">
    <subcellularLocation>
        <location evidence="1">Cytoplasm</location>
    </subcellularLocation>
</comment>
<comment type="similarity">
    <text evidence="1">Belongs to the RecA family.</text>
</comment>
<evidence type="ECO:0000255" key="1">
    <source>
        <dbReference type="HAMAP-Rule" id="MF_00268"/>
    </source>
</evidence>
<organism>
    <name type="scientific">Histophilus somni (strain 2336)</name>
    <name type="common">Haemophilus somnus</name>
    <dbReference type="NCBI Taxonomy" id="228400"/>
    <lineage>
        <taxon>Bacteria</taxon>
        <taxon>Pseudomonadati</taxon>
        <taxon>Pseudomonadota</taxon>
        <taxon>Gammaproteobacteria</taxon>
        <taxon>Pasteurellales</taxon>
        <taxon>Pasteurellaceae</taxon>
        <taxon>Histophilus</taxon>
    </lineage>
</organism>
<reference key="1">
    <citation type="submission" date="2008-02" db="EMBL/GenBank/DDBJ databases">
        <title>Complete sequence of Haemophilus somnus 2336.</title>
        <authorList>
            <consortium name="US DOE Joint Genome Institute"/>
            <person name="Siddaramappa S."/>
            <person name="Duncan A.J."/>
            <person name="Challacombe J.F."/>
            <person name="Rainey D."/>
            <person name="Gillaspy A.F."/>
            <person name="Carson M."/>
            <person name="Gipson J."/>
            <person name="Gipson M."/>
            <person name="Bruce D."/>
            <person name="Detter J.C."/>
            <person name="Han C.S."/>
            <person name="Land M."/>
            <person name="Tapia R."/>
            <person name="Thompson L.S."/>
            <person name="Orvis J."/>
            <person name="Zaitshik J."/>
            <person name="Barnes G."/>
            <person name="Brettin T.S."/>
            <person name="Dyer D.W."/>
            <person name="Inzana T.J."/>
        </authorList>
    </citation>
    <scope>NUCLEOTIDE SEQUENCE [LARGE SCALE GENOMIC DNA]</scope>
    <source>
        <strain>2336</strain>
    </source>
</reference>
<proteinExistence type="inferred from homology"/>
<feature type="chain" id="PRO_1000078668" description="Protein RecA">
    <location>
        <begin position="1"/>
        <end position="355"/>
    </location>
</feature>
<feature type="binding site" evidence="1">
    <location>
        <begin position="67"/>
        <end position="74"/>
    </location>
    <ligand>
        <name>ATP</name>
        <dbReference type="ChEBI" id="CHEBI:30616"/>
    </ligand>
</feature>
<name>RECA_HISS2</name>
<keyword id="KW-0067">ATP-binding</keyword>
<keyword id="KW-0963">Cytoplasm</keyword>
<keyword id="KW-0227">DNA damage</keyword>
<keyword id="KW-0233">DNA recombination</keyword>
<keyword id="KW-0234">DNA repair</keyword>
<keyword id="KW-0238">DNA-binding</keyword>
<keyword id="KW-0547">Nucleotide-binding</keyword>
<keyword id="KW-0742">SOS response</keyword>
<dbReference type="EMBL" id="CP000947">
    <property type="protein sequence ID" value="ACA31947.1"/>
    <property type="molecule type" value="Genomic_DNA"/>
</dbReference>
<dbReference type="RefSeq" id="WP_012341176.1">
    <property type="nucleotide sequence ID" value="NC_010519.1"/>
</dbReference>
<dbReference type="SMR" id="B0UWL1"/>
<dbReference type="STRING" id="228400.HSM_0315"/>
<dbReference type="GeneID" id="31486595"/>
<dbReference type="KEGG" id="hsm:HSM_0315"/>
<dbReference type="HOGENOM" id="CLU_040469_3_2_6"/>
<dbReference type="GO" id="GO:0005829">
    <property type="term" value="C:cytosol"/>
    <property type="evidence" value="ECO:0007669"/>
    <property type="project" value="TreeGrafter"/>
</dbReference>
<dbReference type="GO" id="GO:0005524">
    <property type="term" value="F:ATP binding"/>
    <property type="evidence" value="ECO:0007669"/>
    <property type="project" value="UniProtKB-UniRule"/>
</dbReference>
<dbReference type="GO" id="GO:0016887">
    <property type="term" value="F:ATP hydrolysis activity"/>
    <property type="evidence" value="ECO:0007669"/>
    <property type="project" value="InterPro"/>
</dbReference>
<dbReference type="GO" id="GO:0140664">
    <property type="term" value="F:ATP-dependent DNA damage sensor activity"/>
    <property type="evidence" value="ECO:0007669"/>
    <property type="project" value="InterPro"/>
</dbReference>
<dbReference type="GO" id="GO:0003684">
    <property type="term" value="F:damaged DNA binding"/>
    <property type="evidence" value="ECO:0007669"/>
    <property type="project" value="UniProtKB-UniRule"/>
</dbReference>
<dbReference type="GO" id="GO:0003697">
    <property type="term" value="F:single-stranded DNA binding"/>
    <property type="evidence" value="ECO:0007669"/>
    <property type="project" value="UniProtKB-UniRule"/>
</dbReference>
<dbReference type="GO" id="GO:0006310">
    <property type="term" value="P:DNA recombination"/>
    <property type="evidence" value="ECO:0007669"/>
    <property type="project" value="UniProtKB-UniRule"/>
</dbReference>
<dbReference type="GO" id="GO:0006281">
    <property type="term" value="P:DNA repair"/>
    <property type="evidence" value="ECO:0007669"/>
    <property type="project" value="UniProtKB-UniRule"/>
</dbReference>
<dbReference type="GO" id="GO:0009432">
    <property type="term" value="P:SOS response"/>
    <property type="evidence" value="ECO:0007669"/>
    <property type="project" value="UniProtKB-UniRule"/>
</dbReference>
<dbReference type="CDD" id="cd00983">
    <property type="entry name" value="RecA"/>
    <property type="match status" value="1"/>
</dbReference>
<dbReference type="FunFam" id="3.40.50.300:FF:000087">
    <property type="entry name" value="Recombinase RecA"/>
    <property type="match status" value="1"/>
</dbReference>
<dbReference type="Gene3D" id="3.40.50.300">
    <property type="entry name" value="P-loop containing nucleotide triphosphate hydrolases"/>
    <property type="match status" value="1"/>
</dbReference>
<dbReference type="HAMAP" id="MF_00268">
    <property type="entry name" value="RecA"/>
    <property type="match status" value="1"/>
</dbReference>
<dbReference type="InterPro" id="IPR003593">
    <property type="entry name" value="AAA+_ATPase"/>
</dbReference>
<dbReference type="InterPro" id="IPR013765">
    <property type="entry name" value="DNA_recomb/repair_RecA"/>
</dbReference>
<dbReference type="InterPro" id="IPR020584">
    <property type="entry name" value="DNA_recomb/repair_RecA_CS"/>
</dbReference>
<dbReference type="InterPro" id="IPR027417">
    <property type="entry name" value="P-loop_NTPase"/>
</dbReference>
<dbReference type="InterPro" id="IPR049261">
    <property type="entry name" value="RecA-like_C"/>
</dbReference>
<dbReference type="InterPro" id="IPR049428">
    <property type="entry name" value="RecA-like_N"/>
</dbReference>
<dbReference type="InterPro" id="IPR020588">
    <property type="entry name" value="RecA_ATP-bd"/>
</dbReference>
<dbReference type="InterPro" id="IPR023400">
    <property type="entry name" value="RecA_C_sf"/>
</dbReference>
<dbReference type="InterPro" id="IPR020587">
    <property type="entry name" value="RecA_monomer-monomer_interface"/>
</dbReference>
<dbReference type="NCBIfam" id="TIGR02012">
    <property type="entry name" value="tigrfam_recA"/>
    <property type="match status" value="1"/>
</dbReference>
<dbReference type="PANTHER" id="PTHR45900:SF1">
    <property type="entry name" value="MITOCHONDRIAL DNA REPAIR PROTEIN RECA HOMOLOG-RELATED"/>
    <property type="match status" value="1"/>
</dbReference>
<dbReference type="PANTHER" id="PTHR45900">
    <property type="entry name" value="RECA"/>
    <property type="match status" value="1"/>
</dbReference>
<dbReference type="Pfam" id="PF00154">
    <property type="entry name" value="RecA"/>
    <property type="match status" value="1"/>
</dbReference>
<dbReference type="Pfam" id="PF21096">
    <property type="entry name" value="RecA_C"/>
    <property type="match status" value="1"/>
</dbReference>
<dbReference type="PRINTS" id="PR00142">
    <property type="entry name" value="RECA"/>
</dbReference>
<dbReference type="SMART" id="SM00382">
    <property type="entry name" value="AAA"/>
    <property type="match status" value="1"/>
</dbReference>
<dbReference type="SUPFAM" id="SSF52540">
    <property type="entry name" value="P-loop containing nucleoside triphosphate hydrolases"/>
    <property type="match status" value="1"/>
</dbReference>
<dbReference type="SUPFAM" id="SSF54752">
    <property type="entry name" value="RecA protein, C-terminal domain"/>
    <property type="match status" value="1"/>
</dbReference>
<dbReference type="PROSITE" id="PS00321">
    <property type="entry name" value="RECA_1"/>
    <property type="match status" value="1"/>
</dbReference>
<dbReference type="PROSITE" id="PS50162">
    <property type="entry name" value="RECA_2"/>
    <property type="match status" value="1"/>
</dbReference>
<dbReference type="PROSITE" id="PS50163">
    <property type="entry name" value="RECA_3"/>
    <property type="match status" value="1"/>
</dbReference>
<sequence length="355" mass="38107">MATPEEKAKALEAALGQIEKQFGKGAIMKLGETQKLDIEAISTGSLSLDVALGIGGLPMGRIVEIFGPESSGKTTLTLSVIAQAQKAGKTCAFIDAEHALDPIYAAKLGVDVKELLISQPDNGEQALEICDALVRSGAVDVVIVDSVAALTPKAEIEGEMGDTHVGLQARLMSQALRKLTGQIKNSNCLVVFINQIRMKIGVVFGNPETTTGGNALKFYASVRLDIRRVGSIKNGDEVIGNETRVKVVKNKVAPPFRQVDFQILYGEGISRNGELIELGVKHKLVNKSGAWFSYEGEKIGQGKTNAMKWLAEHPEQAAILEQKLRSELLANPEKALLADLEAESESNISEVESDF</sequence>
<protein>
    <recommendedName>
        <fullName evidence="1">Protein RecA</fullName>
    </recommendedName>
    <alternativeName>
        <fullName evidence="1">Recombinase A</fullName>
    </alternativeName>
</protein>
<accession>B0UWL1</accession>
<gene>
    <name evidence="1" type="primary">recA</name>
    <name type="ordered locus">HSM_0315</name>
</gene>